<proteinExistence type="evidence at protein level"/>
<gene>
    <name evidence="6" type="primary">RPS31</name>
    <name type="synonym">RPS37</name>
    <name type="synonym">UBI3</name>
    <name type="ordered locus">YLR167W</name>
    <name type="ORF">L9470.14</name>
</gene>
<accession>P05759</accession>
<accession>D6VYH3</accession>
<accession>P04838</accession>
<accession>P14800</accession>
<accession>P61864</accession>
<accession>Q6LA96</accession>
<evidence type="ECO:0000250" key="1"/>
<evidence type="ECO:0000250" key="2">
    <source>
        <dbReference type="UniProtKB" id="P62979"/>
    </source>
</evidence>
<evidence type="ECO:0000255" key="3">
    <source>
        <dbReference type="PROSITE-ProRule" id="PRU00214"/>
    </source>
</evidence>
<evidence type="ECO:0000269" key="4">
    <source>
    </source>
</evidence>
<evidence type="ECO:0000269" key="5">
    <source>
    </source>
</evidence>
<evidence type="ECO:0000303" key="6">
    <source>
    </source>
</evidence>
<evidence type="ECO:0000303" key="7">
    <source>
    </source>
</evidence>
<evidence type="ECO:0000305" key="8"/>
<evidence type="ECO:0000305" key="9">
    <source>
    </source>
</evidence>
<evidence type="ECO:0000305" key="10">
    <source>
    </source>
</evidence>
<evidence type="ECO:0007744" key="11">
    <source>
    </source>
</evidence>
<evidence type="ECO:0007744" key="12">
    <source>
    </source>
</evidence>
<evidence type="ECO:0007829" key="13">
    <source>
        <dbReference type="PDB" id="5L6H"/>
    </source>
</evidence>
<evidence type="ECO:0007829" key="14">
    <source>
        <dbReference type="PDB" id="6ZQH"/>
    </source>
</evidence>
<evidence type="ECO:0007829" key="15">
    <source>
        <dbReference type="PDB" id="6ZVI"/>
    </source>
</evidence>
<evidence type="ECO:0007829" key="16">
    <source>
        <dbReference type="PDB" id="8C83"/>
    </source>
</evidence>
<sequence>MQIFVKTLTGKTITLEVESSDTIDNVKSKIQDKEGIPPDQQRLIFAGKQLEDGRTLSDYNIQKESTLHLVLRLRGGGKKRKKKVYTTPKKIKHKHKKVKLAVLSYYKVDAEGKVTKLRRECSNPTCGAGVFLANHKDRLYCGKCHSVYKVNA</sequence>
<dbReference type="EMBL" id="X05730">
    <property type="protein sequence ID" value="CAA29197.1"/>
    <property type="molecule type" value="Genomic_DNA"/>
</dbReference>
<dbReference type="EMBL" id="U17246">
    <property type="protein sequence ID" value="AAB67466.1"/>
    <property type="molecule type" value="Genomic_DNA"/>
</dbReference>
<dbReference type="EMBL" id="BK006945">
    <property type="protein sequence ID" value="DAA09489.1"/>
    <property type="molecule type" value="Genomic_DNA"/>
</dbReference>
<dbReference type="PIR" id="C29456">
    <property type="entry name" value="UQBYR7"/>
</dbReference>
<dbReference type="RefSeq" id="NP_013268.1">
    <property type="nucleotide sequence ID" value="NM_001182054.1"/>
</dbReference>
<dbReference type="PDB" id="3J6X">
    <property type="method" value="EM"/>
    <property type="resolution" value="6.10 A"/>
    <property type="chains" value="31=1-152"/>
</dbReference>
<dbReference type="PDB" id="3J6Y">
    <property type="method" value="EM"/>
    <property type="resolution" value="6.10 A"/>
    <property type="chains" value="31=1-152"/>
</dbReference>
<dbReference type="PDB" id="3J77">
    <property type="method" value="EM"/>
    <property type="resolution" value="6.20 A"/>
    <property type="chains" value="31=1-152"/>
</dbReference>
<dbReference type="PDB" id="3J78">
    <property type="method" value="EM"/>
    <property type="resolution" value="6.30 A"/>
    <property type="chains" value="31=1-152"/>
</dbReference>
<dbReference type="PDB" id="4U3M">
    <property type="method" value="X-ray"/>
    <property type="resolution" value="3.00 A"/>
    <property type="chains" value="E1=77-152, e1=78-152"/>
</dbReference>
<dbReference type="PDB" id="4U3N">
    <property type="method" value="X-ray"/>
    <property type="resolution" value="3.20 A"/>
    <property type="chains" value="E1=77-152, e1=78-152"/>
</dbReference>
<dbReference type="PDB" id="4U3U">
    <property type="method" value="X-ray"/>
    <property type="resolution" value="2.90 A"/>
    <property type="chains" value="E1=77-152, e1=78-152"/>
</dbReference>
<dbReference type="PDB" id="4U4N">
    <property type="method" value="X-ray"/>
    <property type="resolution" value="3.10 A"/>
    <property type="chains" value="E1/e1=77-152"/>
</dbReference>
<dbReference type="PDB" id="4U4O">
    <property type="method" value="X-ray"/>
    <property type="resolution" value="3.60 A"/>
    <property type="chains" value="E1=78-152, e1=77-152"/>
</dbReference>
<dbReference type="PDB" id="4U4Q">
    <property type="method" value="X-ray"/>
    <property type="resolution" value="3.00 A"/>
    <property type="chains" value="E1/e1=77-152"/>
</dbReference>
<dbReference type="PDB" id="4U4R">
    <property type="method" value="X-ray"/>
    <property type="resolution" value="2.80 A"/>
    <property type="chains" value="E1/e1=77-152"/>
</dbReference>
<dbReference type="PDB" id="4U4U">
    <property type="method" value="X-ray"/>
    <property type="resolution" value="3.00 A"/>
    <property type="chains" value="E1/e1=77-152"/>
</dbReference>
<dbReference type="PDB" id="4U4Y">
    <property type="method" value="X-ray"/>
    <property type="resolution" value="3.20 A"/>
    <property type="chains" value="E1/e1=77-152"/>
</dbReference>
<dbReference type="PDB" id="4U4Z">
    <property type="method" value="X-ray"/>
    <property type="resolution" value="3.10 A"/>
    <property type="chains" value="E1/e1=77-152"/>
</dbReference>
<dbReference type="PDB" id="4U50">
    <property type="method" value="X-ray"/>
    <property type="resolution" value="3.20 A"/>
    <property type="chains" value="E1/e1=78-152"/>
</dbReference>
<dbReference type="PDB" id="4U51">
    <property type="method" value="X-ray"/>
    <property type="resolution" value="3.20 A"/>
    <property type="chains" value="E1/e1=77-152"/>
</dbReference>
<dbReference type="PDB" id="4U52">
    <property type="method" value="X-ray"/>
    <property type="resolution" value="3.00 A"/>
    <property type="chains" value="E1/e1=77-152"/>
</dbReference>
<dbReference type="PDB" id="4U53">
    <property type="method" value="X-ray"/>
    <property type="resolution" value="3.30 A"/>
    <property type="chains" value="E1/e1=77-152"/>
</dbReference>
<dbReference type="PDB" id="4U55">
    <property type="method" value="X-ray"/>
    <property type="resolution" value="3.20 A"/>
    <property type="chains" value="E1/e1=77-152"/>
</dbReference>
<dbReference type="PDB" id="4U56">
    <property type="method" value="X-ray"/>
    <property type="resolution" value="3.45 A"/>
    <property type="chains" value="E1/e1=77-152"/>
</dbReference>
<dbReference type="PDB" id="4U6F">
    <property type="method" value="X-ray"/>
    <property type="resolution" value="3.10 A"/>
    <property type="chains" value="E1/e1=77-152"/>
</dbReference>
<dbReference type="PDB" id="4V88">
    <property type="method" value="X-ray"/>
    <property type="resolution" value="3.00 A"/>
    <property type="chains" value="Af/Cf=1-152"/>
</dbReference>
<dbReference type="PDB" id="4V8Y">
    <property type="method" value="EM"/>
    <property type="resolution" value="4.30 A"/>
    <property type="chains" value="A5=1-152"/>
</dbReference>
<dbReference type="PDB" id="4V8Z">
    <property type="method" value="EM"/>
    <property type="resolution" value="6.60 A"/>
    <property type="chains" value="A5=1-152"/>
</dbReference>
<dbReference type="PDB" id="4V92">
    <property type="method" value="EM"/>
    <property type="resolution" value="3.70 A"/>
    <property type="chains" value="f=101-152"/>
</dbReference>
<dbReference type="PDB" id="5DAT">
    <property type="method" value="X-ray"/>
    <property type="resolution" value="3.15 A"/>
    <property type="chains" value="E1/e1=77-152"/>
</dbReference>
<dbReference type="PDB" id="5DC3">
    <property type="method" value="X-ray"/>
    <property type="resolution" value="3.25 A"/>
    <property type="chains" value="E1/e1=78-152"/>
</dbReference>
<dbReference type="PDB" id="5DGE">
    <property type="method" value="X-ray"/>
    <property type="resolution" value="3.45 A"/>
    <property type="chains" value="E1/e1=77-152"/>
</dbReference>
<dbReference type="PDB" id="5DGF">
    <property type="method" value="X-ray"/>
    <property type="resolution" value="3.30 A"/>
    <property type="chains" value="E1/e1=77-152"/>
</dbReference>
<dbReference type="PDB" id="5DGV">
    <property type="method" value="X-ray"/>
    <property type="resolution" value="3.10 A"/>
    <property type="chains" value="E1/e1=77-152"/>
</dbReference>
<dbReference type="PDB" id="5FCI">
    <property type="method" value="X-ray"/>
    <property type="resolution" value="3.40 A"/>
    <property type="chains" value="E1/e1=77-152"/>
</dbReference>
<dbReference type="PDB" id="5FCJ">
    <property type="method" value="X-ray"/>
    <property type="resolution" value="3.10 A"/>
    <property type="chains" value="E1/e1=77-152"/>
</dbReference>
<dbReference type="PDB" id="5I4L">
    <property type="method" value="X-ray"/>
    <property type="resolution" value="3.10 A"/>
    <property type="chains" value="E1/e1=77-152"/>
</dbReference>
<dbReference type="PDB" id="5JUO">
    <property type="method" value="EM"/>
    <property type="resolution" value="4.00 A"/>
    <property type="chains" value="CC=1-152"/>
</dbReference>
<dbReference type="PDB" id="5JUP">
    <property type="method" value="EM"/>
    <property type="resolution" value="3.50 A"/>
    <property type="chains" value="CC=1-152"/>
</dbReference>
<dbReference type="PDB" id="5JUS">
    <property type="method" value="EM"/>
    <property type="resolution" value="4.20 A"/>
    <property type="chains" value="CC=1-152"/>
</dbReference>
<dbReference type="PDB" id="5JUT">
    <property type="method" value="EM"/>
    <property type="resolution" value="4.00 A"/>
    <property type="chains" value="CC=1-152"/>
</dbReference>
<dbReference type="PDB" id="5JUU">
    <property type="method" value="EM"/>
    <property type="resolution" value="4.00 A"/>
    <property type="chains" value="CC=1-152"/>
</dbReference>
<dbReference type="PDB" id="5L6H">
    <property type="method" value="X-ray"/>
    <property type="resolution" value="2.30 A"/>
    <property type="chains" value="B/D/E=1-76"/>
</dbReference>
<dbReference type="PDB" id="5L6I">
    <property type="method" value="X-ray"/>
    <property type="resolution" value="2.76 A"/>
    <property type="chains" value="B/D/E=1-76"/>
</dbReference>
<dbReference type="PDB" id="5L6J">
    <property type="method" value="X-ray"/>
    <property type="resolution" value="2.68 A"/>
    <property type="chains" value="B/D=1-76"/>
</dbReference>
<dbReference type="PDB" id="5LYB">
    <property type="method" value="X-ray"/>
    <property type="resolution" value="3.25 A"/>
    <property type="chains" value="E1/e1=77-152"/>
</dbReference>
<dbReference type="PDB" id="5M1J">
    <property type="method" value="EM"/>
    <property type="resolution" value="3.30 A"/>
    <property type="chains" value="f2=82-152"/>
</dbReference>
<dbReference type="PDB" id="5MC6">
    <property type="method" value="EM"/>
    <property type="resolution" value="3.80 A"/>
    <property type="chains" value="N=1-152"/>
</dbReference>
<dbReference type="PDB" id="5NDG">
    <property type="method" value="X-ray"/>
    <property type="resolution" value="3.70 A"/>
    <property type="chains" value="E1/e1=1-152"/>
</dbReference>
<dbReference type="PDB" id="5NDW">
    <property type="method" value="X-ray"/>
    <property type="resolution" value="3.70 A"/>
    <property type="chains" value="E1/e1=80-152"/>
</dbReference>
<dbReference type="PDB" id="5OBM">
    <property type="method" value="X-ray"/>
    <property type="resolution" value="3.40 A"/>
    <property type="chains" value="E1/e1=81-152"/>
</dbReference>
<dbReference type="PDB" id="5TGA">
    <property type="method" value="X-ray"/>
    <property type="resolution" value="3.30 A"/>
    <property type="chains" value="E1/e1=77-152"/>
</dbReference>
<dbReference type="PDB" id="5TGM">
    <property type="method" value="X-ray"/>
    <property type="resolution" value="3.50 A"/>
    <property type="chains" value="E1/e1=77-152"/>
</dbReference>
<dbReference type="PDB" id="5U4P">
    <property type="method" value="X-ray"/>
    <property type="resolution" value="2.50 A"/>
    <property type="chains" value="C=1-76"/>
</dbReference>
<dbReference type="PDB" id="5WYJ">
    <property type="method" value="EM"/>
    <property type="resolution" value="8.70 A"/>
    <property type="chains" value="Sg=1-152"/>
</dbReference>
<dbReference type="PDB" id="6EML">
    <property type="method" value="EM"/>
    <property type="resolution" value="3.60 A"/>
    <property type="chains" value="N=1-152"/>
</dbReference>
<dbReference type="PDB" id="6GQ1">
    <property type="method" value="EM"/>
    <property type="resolution" value="4.40 A"/>
    <property type="chains" value="AW=116-152"/>
</dbReference>
<dbReference type="PDB" id="6GQB">
    <property type="method" value="EM"/>
    <property type="resolution" value="3.90 A"/>
    <property type="chains" value="AW=116-152"/>
</dbReference>
<dbReference type="PDB" id="6GQV">
    <property type="method" value="EM"/>
    <property type="resolution" value="4.00 A"/>
    <property type="chains" value="AW=116-152"/>
</dbReference>
<dbReference type="PDB" id="6HHQ">
    <property type="method" value="X-ray"/>
    <property type="resolution" value="3.10 A"/>
    <property type="chains" value="e1/g=1-152"/>
</dbReference>
<dbReference type="PDB" id="6I7O">
    <property type="method" value="EM"/>
    <property type="resolution" value="5.30 A"/>
    <property type="chains" value="N/Nb=80-152"/>
</dbReference>
<dbReference type="PDB" id="6Q8Y">
    <property type="method" value="EM"/>
    <property type="resolution" value="3.10 A"/>
    <property type="chains" value="N=102-152"/>
</dbReference>
<dbReference type="PDB" id="6RBE">
    <property type="method" value="EM"/>
    <property type="resolution" value="3.80 A"/>
    <property type="chains" value="f=1-152"/>
</dbReference>
<dbReference type="PDB" id="6S47">
    <property type="method" value="EM"/>
    <property type="resolution" value="3.28 A"/>
    <property type="chains" value="Bg=2-152"/>
</dbReference>
<dbReference type="PDB" id="6SNT">
    <property type="method" value="EM"/>
    <property type="resolution" value="2.80 A"/>
    <property type="chains" value="f=1-152"/>
</dbReference>
<dbReference type="PDB" id="6SV4">
    <property type="method" value="EM"/>
    <property type="resolution" value="3.30 A"/>
    <property type="chains" value="N/Nb/Nc=1-152"/>
</dbReference>
<dbReference type="PDB" id="6T4Q">
    <property type="method" value="EM"/>
    <property type="resolution" value="2.60 A"/>
    <property type="chains" value="Sf=80-152"/>
</dbReference>
<dbReference type="PDB" id="6T7I">
    <property type="method" value="EM"/>
    <property type="resolution" value="3.20 A"/>
    <property type="chains" value="Sf=1-152"/>
</dbReference>
<dbReference type="PDB" id="6T7T">
    <property type="method" value="EM"/>
    <property type="resolution" value="3.10 A"/>
    <property type="chains" value="Sf=1-152"/>
</dbReference>
<dbReference type="PDB" id="6T83">
    <property type="method" value="EM"/>
    <property type="resolution" value="4.00 A"/>
    <property type="chains" value="6/fb=1-152"/>
</dbReference>
<dbReference type="PDB" id="6TB3">
    <property type="method" value="EM"/>
    <property type="resolution" value="2.80 A"/>
    <property type="chains" value="N=80-152"/>
</dbReference>
<dbReference type="PDB" id="6TNU">
    <property type="method" value="EM"/>
    <property type="resolution" value="3.10 A"/>
    <property type="chains" value="N=80-152"/>
</dbReference>
<dbReference type="PDB" id="6WDR">
    <property type="method" value="EM"/>
    <property type="resolution" value="3.70 A"/>
    <property type="chains" value="f=82-152"/>
</dbReference>
<dbReference type="PDB" id="6WOO">
    <property type="method" value="EM"/>
    <property type="resolution" value="2.90 A"/>
    <property type="chains" value="ff=94-150"/>
</dbReference>
<dbReference type="PDB" id="6Z6J">
    <property type="method" value="EM"/>
    <property type="resolution" value="3.40 A"/>
    <property type="chains" value="Sf=1-152"/>
</dbReference>
<dbReference type="PDB" id="6Z6K">
    <property type="method" value="EM"/>
    <property type="resolution" value="3.40 A"/>
    <property type="chains" value="Sf=1-152"/>
</dbReference>
<dbReference type="PDB" id="6ZCE">
    <property type="method" value="EM"/>
    <property type="resolution" value="5.30 A"/>
    <property type="chains" value="g=1-152"/>
</dbReference>
<dbReference type="PDB" id="6ZQH">
    <property type="method" value="X-ray"/>
    <property type="resolution" value="2.03 A"/>
    <property type="chains" value="B/D=1-76"/>
</dbReference>
<dbReference type="PDB" id="6ZU9">
    <property type="method" value="EM"/>
    <property type="resolution" value="6.20 A"/>
    <property type="chains" value="O=1-152"/>
</dbReference>
<dbReference type="PDB" id="6ZVI">
    <property type="method" value="EM"/>
    <property type="resolution" value="3.00 A"/>
    <property type="chains" value="Q=80-152"/>
</dbReference>
<dbReference type="PDB" id="7A1G">
    <property type="method" value="EM"/>
    <property type="resolution" value="3.00 A"/>
    <property type="chains" value="N=80-152"/>
</dbReference>
<dbReference type="PDB" id="7B7D">
    <property type="method" value="EM"/>
    <property type="resolution" value="3.30 A"/>
    <property type="chains" value="N=80-152"/>
</dbReference>
<dbReference type="PDB" id="7MPI">
    <property type="method" value="EM"/>
    <property type="resolution" value="3.05 A"/>
    <property type="chains" value="Bf=93-152"/>
</dbReference>
<dbReference type="PDB" id="7MPJ">
    <property type="method" value="EM"/>
    <property type="resolution" value="2.70 A"/>
    <property type="chains" value="Bf=93-152"/>
</dbReference>
<dbReference type="PDB" id="7N8B">
    <property type="method" value="EM"/>
    <property type="resolution" value="3.05 A"/>
    <property type="chains" value="Bf=93-152"/>
</dbReference>
<dbReference type="PDB" id="7NRC">
    <property type="method" value="EM"/>
    <property type="resolution" value="3.90 A"/>
    <property type="chains" value="SN=80-152"/>
</dbReference>
<dbReference type="PDB" id="7NRD">
    <property type="method" value="EM"/>
    <property type="resolution" value="4.36 A"/>
    <property type="chains" value="SN=80-152"/>
</dbReference>
<dbReference type="PDB" id="7ZPQ">
    <property type="method" value="EM"/>
    <property type="resolution" value="3.47 A"/>
    <property type="chains" value="Af=80-152"/>
</dbReference>
<dbReference type="PDB" id="7ZRS">
    <property type="method" value="EM"/>
    <property type="resolution" value="4.80 A"/>
    <property type="chains" value="Af=80-152"/>
</dbReference>
<dbReference type="PDB" id="7ZUW">
    <property type="method" value="EM"/>
    <property type="resolution" value="4.30 A"/>
    <property type="chains" value="Af=80-152"/>
</dbReference>
<dbReference type="PDB" id="7ZUX">
    <property type="method" value="EM"/>
    <property type="resolution" value="2.50 A"/>
    <property type="chains" value="Df=80-152"/>
</dbReference>
<dbReference type="PDB" id="7ZW0">
    <property type="method" value="EM"/>
    <property type="resolution" value="2.40 A"/>
    <property type="chains" value="sN=77-152"/>
</dbReference>
<dbReference type="PDB" id="8BN3">
    <property type="method" value="EM"/>
    <property type="resolution" value="2.40 A"/>
    <property type="chains" value="E1=82-152"/>
</dbReference>
<dbReference type="PDB" id="8BQD">
    <property type="method" value="EM"/>
    <property type="resolution" value="3.90 A"/>
    <property type="chains" value="N=80-152"/>
</dbReference>
<dbReference type="PDB" id="8BQX">
    <property type="method" value="EM"/>
    <property type="resolution" value="3.80 A"/>
    <property type="chains" value="N=80-152"/>
</dbReference>
<dbReference type="PDB" id="8C83">
    <property type="method" value="EM"/>
    <property type="resolution" value="3.00 A"/>
    <property type="chains" value="y=1-76"/>
</dbReference>
<dbReference type="PDB" id="8CAH">
    <property type="method" value="EM"/>
    <property type="resolution" value="3.00 A"/>
    <property type="chains" value="N=77-152"/>
</dbReference>
<dbReference type="PDB" id="8CAS">
    <property type="method" value="EM"/>
    <property type="resolution" value="3.30 A"/>
    <property type="chains" value="O=77-152"/>
</dbReference>
<dbReference type="PDB" id="8CCS">
    <property type="method" value="EM"/>
    <property type="resolution" value="1.97 A"/>
    <property type="chains" value="8=1-152"/>
</dbReference>
<dbReference type="PDB" id="8CDL">
    <property type="method" value="EM"/>
    <property type="resolution" value="2.72 A"/>
    <property type="chains" value="8=1-152"/>
</dbReference>
<dbReference type="PDB" id="8CDR">
    <property type="method" value="EM"/>
    <property type="resolution" value="2.04 A"/>
    <property type="chains" value="8=1-152"/>
</dbReference>
<dbReference type="PDB" id="8K2D">
    <property type="method" value="EM"/>
    <property type="resolution" value="3.20 A"/>
    <property type="chains" value="Sf=1-152"/>
</dbReference>
<dbReference type="PDB" id="8K82">
    <property type="method" value="EM"/>
    <property type="resolution" value="3.00 A"/>
    <property type="chains" value="Sf=1-152"/>
</dbReference>
<dbReference type="PDB" id="8P4V">
    <property type="method" value="X-ray"/>
    <property type="resolution" value="3.16 A"/>
    <property type="chains" value="e1/g=1-152"/>
</dbReference>
<dbReference type="PDB" id="8P9A">
    <property type="method" value="X-ray"/>
    <property type="resolution" value="2.90 A"/>
    <property type="chains" value="e1/g=1-152"/>
</dbReference>
<dbReference type="PDB" id="8T2X">
    <property type="method" value="EM"/>
    <property type="resolution" value="2.46 A"/>
    <property type="chains" value="Bf=1-152"/>
</dbReference>
<dbReference type="PDB" id="8T2Y">
    <property type="method" value="EM"/>
    <property type="resolution" value="2.20 A"/>
    <property type="chains" value="Bf=1-152"/>
</dbReference>
<dbReference type="PDB" id="8T2Z">
    <property type="method" value="EM"/>
    <property type="resolution" value="2.40 A"/>
    <property type="chains" value="Bf=1-152"/>
</dbReference>
<dbReference type="PDB" id="8T30">
    <property type="method" value="EM"/>
    <property type="resolution" value="2.88 A"/>
    <property type="chains" value="Bf=1-152"/>
</dbReference>
<dbReference type="PDB" id="8T3A">
    <property type="method" value="EM"/>
    <property type="resolution" value="2.86 A"/>
    <property type="chains" value="Bf=1-152"/>
</dbReference>
<dbReference type="PDB" id="8T3B">
    <property type="method" value="EM"/>
    <property type="resolution" value="3.08 A"/>
    <property type="chains" value="Bf=1-152"/>
</dbReference>
<dbReference type="PDB" id="8T3C">
    <property type="method" value="EM"/>
    <property type="resolution" value="3.86 A"/>
    <property type="chains" value="Bf=1-152"/>
</dbReference>
<dbReference type="PDB" id="8T3D">
    <property type="method" value="EM"/>
    <property type="resolution" value="2.95 A"/>
    <property type="chains" value="Bf=1-152"/>
</dbReference>
<dbReference type="PDB" id="8T3E">
    <property type="method" value="EM"/>
    <property type="resolution" value="3.04 A"/>
    <property type="chains" value="Bf=1-152"/>
</dbReference>
<dbReference type="PDB" id="8T3F">
    <property type="method" value="EM"/>
    <property type="resolution" value="3.09 A"/>
    <property type="chains" value="Bf=1-152"/>
</dbReference>
<dbReference type="PDB" id="8UT0">
    <property type="method" value="EM"/>
    <property type="resolution" value="3.22 A"/>
    <property type="chains" value="SN=80-152"/>
</dbReference>
<dbReference type="PDB" id="8UTI">
    <property type="method" value="EM"/>
    <property type="resolution" value="3.13 A"/>
    <property type="chains" value="SN=80-152"/>
</dbReference>
<dbReference type="PDB" id="8XU8">
    <property type="method" value="EM"/>
    <property type="resolution" value="3.40 A"/>
    <property type="chains" value="SN=80-152"/>
</dbReference>
<dbReference type="PDB" id="8Y0U">
    <property type="method" value="EM"/>
    <property type="resolution" value="3.59 A"/>
    <property type="chains" value="Sf=1-152"/>
</dbReference>
<dbReference type="PDB" id="8YLD">
    <property type="method" value="EM"/>
    <property type="resolution" value="3.90 A"/>
    <property type="chains" value="SN=80-152"/>
</dbReference>
<dbReference type="PDB" id="8YLR">
    <property type="method" value="EM"/>
    <property type="resolution" value="3.90 A"/>
    <property type="chains" value="SN=80-152"/>
</dbReference>
<dbReference type="PDB" id="8Z70">
    <property type="method" value="EM"/>
    <property type="resolution" value="3.20 A"/>
    <property type="chains" value="SN=80-152"/>
</dbReference>
<dbReference type="PDB" id="8Z71">
    <property type="method" value="EM"/>
    <property type="resolution" value="3.60 A"/>
    <property type="chains" value="SN=80-152"/>
</dbReference>
<dbReference type="PDB" id="9EYH">
    <property type="method" value="X-ray"/>
    <property type="resolution" value="2.60 A"/>
    <property type="chains" value="C/D000=1-76"/>
</dbReference>
<dbReference type="PDB" id="9F9S">
    <property type="method" value="EM"/>
    <property type="resolution" value="2.90 A"/>
    <property type="chains" value="RF/SF=1-152"/>
</dbReference>
<dbReference type="PDBsum" id="3J6X"/>
<dbReference type="PDBsum" id="3J6Y"/>
<dbReference type="PDBsum" id="3J77"/>
<dbReference type="PDBsum" id="3J78"/>
<dbReference type="PDBsum" id="4U3M"/>
<dbReference type="PDBsum" id="4U3N"/>
<dbReference type="PDBsum" id="4U3U"/>
<dbReference type="PDBsum" id="4U4N"/>
<dbReference type="PDBsum" id="4U4O"/>
<dbReference type="PDBsum" id="4U4Q"/>
<dbReference type="PDBsum" id="4U4R"/>
<dbReference type="PDBsum" id="4U4U"/>
<dbReference type="PDBsum" id="4U4Y"/>
<dbReference type="PDBsum" id="4U4Z"/>
<dbReference type="PDBsum" id="4U50"/>
<dbReference type="PDBsum" id="4U51"/>
<dbReference type="PDBsum" id="4U52"/>
<dbReference type="PDBsum" id="4U53"/>
<dbReference type="PDBsum" id="4U55"/>
<dbReference type="PDBsum" id="4U56"/>
<dbReference type="PDBsum" id="4U6F"/>
<dbReference type="PDBsum" id="4V88"/>
<dbReference type="PDBsum" id="4V8Y"/>
<dbReference type="PDBsum" id="4V8Z"/>
<dbReference type="PDBsum" id="4V92"/>
<dbReference type="PDBsum" id="5DAT"/>
<dbReference type="PDBsum" id="5DC3"/>
<dbReference type="PDBsum" id="5DGE"/>
<dbReference type="PDBsum" id="5DGF"/>
<dbReference type="PDBsum" id="5DGV"/>
<dbReference type="PDBsum" id="5FCI"/>
<dbReference type="PDBsum" id="5FCJ"/>
<dbReference type="PDBsum" id="5I4L"/>
<dbReference type="PDBsum" id="5JUO"/>
<dbReference type="PDBsum" id="5JUP"/>
<dbReference type="PDBsum" id="5JUS"/>
<dbReference type="PDBsum" id="5JUT"/>
<dbReference type="PDBsum" id="5JUU"/>
<dbReference type="PDBsum" id="5L6H"/>
<dbReference type="PDBsum" id="5L6I"/>
<dbReference type="PDBsum" id="5L6J"/>
<dbReference type="PDBsum" id="5LYB"/>
<dbReference type="PDBsum" id="5M1J"/>
<dbReference type="PDBsum" id="5MC6"/>
<dbReference type="PDBsum" id="5NDG"/>
<dbReference type="PDBsum" id="5NDW"/>
<dbReference type="PDBsum" id="5OBM"/>
<dbReference type="PDBsum" id="5TGA"/>
<dbReference type="PDBsum" id="5TGM"/>
<dbReference type="PDBsum" id="5U4P"/>
<dbReference type="PDBsum" id="5WYJ"/>
<dbReference type="PDBsum" id="6EML"/>
<dbReference type="PDBsum" id="6GQ1"/>
<dbReference type="PDBsum" id="6GQB"/>
<dbReference type="PDBsum" id="6GQV"/>
<dbReference type="PDBsum" id="6HHQ"/>
<dbReference type="PDBsum" id="6I7O"/>
<dbReference type="PDBsum" id="6Q8Y"/>
<dbReference type="PDBsum" id="6RBE"/>
<dbReference type="PDBsum" id="6S47"/>
<dbReference type="PDBsum" id="6SNT"/>
<dbReference type="PDBsum" id="6SV4"/>
<dbReference type="PDBsum" id="6T4Q"/>
<dbReference type="PDBsum" id="6T7I"/>
<dbReference type="PDBsum" id="6T7T"/>
<dbReference type="PDBsum" id="6T83"/>
<dbReference type="PDBsum" id="6TB3"/>
<dbReference type="PDBsum" id="6TNU"/>
<dbReference type="PDBsum" id="6WDR"/>
<dbReference type="PDBsum" id="6WOO"/>
<dbReference type="PDBsum" id="6Z6J"/>
<dbReference type="PDBsum" id="6Z6K"/>
<dbReference type="PDBsum" id="6ZCE"/>
<dbReference type="PDBsum" id="6ZQH"/>
<dbReference type="PDBsum" id="6ZU9"/>
<dbReference type="PDBsum" id="6ZVI"/>
<dbReference type="PDBsum" id="7A1G"/>
<dbReference type="PDBsum" id="7B7D"/>
<dbReference type="PDBsum" id="7MPI"/>
<dbReference type="PDBsum" id="7MPJ"/>
<dbReference type="PDBsum" id="7N8B"/>
<dbReference type="PDBsum" id="7NRC"/>
<dbReference type="PDBsum" id="7NRD"/>
<dbReference type="PDBsum" id="7ZPQ"/>
<dbReference type="PDBsum" id="7ZRS"/>
<dbReference type="PDBsum" id="7ZUW"/>
<dbReference type="PDBsum" id="7ZUX"/>
<dbReference type="PDBsum" id="7ZW0"/>
<dbReference type="PDBsum" id="8BN3"/>
<dbReference type="PDBsum" id="8BQD"/>
<dbReference type="PDBsum" id="8BQX"/>
<dbReference type="PDBsum" id="8C83"/>
<dbReference type="PDBsum" id="8CAH"/>
<dbReference type="PDBsum" id="8CAS"/>
<dbReference type="PDBsum" id="8CCS"/>
<dbReference type="PDBsum" id="8CDL"/>
<dbReference type="PDBsum" id="8CDR"/>
<dbReference type="PDBsum" id="8K2D"/>
<dbReference type="PDBsum" id="8K82"/>
<dbReference type="PDBsum" id="8P4V"/>
<dbReference type="PDBsum" id="8P9A"/>
<dbReference type="PDBsum" id="8T2X"/>
<dbReference type="PDBsum" id="8T2Y"/>
<dbReference type="PDBsum" id="8T2Z"/>
<dbReference type="PDBsum" id="8T30"/>
<dbReference type="PDBsum" id="8T3A"/>
<dbReference type="PDBsum" id="8T3B"/>
<dbReference type="PDBsum" id="8T3C"/>
<dbReference type="PDBsum" id="8T3D"/>
<dbReference type="PDBsum" id="8T3E"/>
<dbReference type="PDBsum" id="8T3F"/>
<dbReference type="PDBsum" id="8UT0"/>
<dbReference type="PDBsum" id="8UTI"/>
<dbReference type="PDBsum" id="8XU8"/>
<dbReference type="PDBsum" id="8Y0U"/>
<dbReference type="PDBsum" id="8YLD"/>
<dbReference type="PDBsum" id="8YLR"/>
<dbReference type="PDBsum" id="8Z70"/>
<dbReference type="PDBsum" id="8Z71"/>
<dbReference type="PDBsum" id="9EYH"/>
<dbReference type="PDBsum" id="9F9S"/>
<dbReference type="BMRB" id="P05759"/>
<dbReference type="EMDB" id="EMD-0047"/>
<dbReference type="EMDB" id="EMD-0048"/>
<dbReference type="EMDB" id="EMD-0049"/>
<dbReference type="EMDB" id="EMD-10098"/>
<dbReference type="EMDB" id="EMD-10262"/>
<dbReference type="EMDB" id="EMD-10315"/>
<dbReference type="EMDB" id="EMD-10377"/>
<dbReference type="EMDB" id="EMD-10396"/>
<dbReference type="EMDB" id="EMD-10397"/>
<dbReference type="EMDB" id="EMD-10398"/>
<dbReference type="EMDB" id="EMD-10431"/>
<dbReference type="EMDB" id="EMD-10537"/>
<dbReference type="EMDB" id="EMD-11096"/>
<dbReference type="EMDB" id="EMD-11097"/>
<dbReference type="EMDB" id="EMD-11160"/>
<dbReference type="EMDB" id="EMD-11439"/>
<dbReference type="EMDB" id="EMD-11608"/>
<dbReference type="EMDB" id="EMD-12081"/>
<dbReference type="EMDB" id="EMD-12534"/>
<dbReference type="EMDB" id="EMD-12535"/>
<dbReference type="EMDB" id="EMD-14979"/>
<dbReference type="EMDB" id="EMD-14990"/>
<dbReference type="EMDB" id="EMD-16182"/>
<dbReference type="EMDB" id="EMD-16191"/>
<dbReference type="EMDB" id="EMD-16470"/>
<dbReference type="EMDB" id="EMD-16525"/>
<dbReference type="EMDB" id="EMD-16533"/>
<dbReference type="EMDB" id="EMD-21644"/>
<dbReference type="EMDB" id="EMD-21859"/>
<dbReference type="EMDB" id="EMD-23934"/>
<dbReference type="EMDB" id="EMD-23935"/>
<dbReference type="EMDB" id="EMD-24235"/>
<dbReference type="EMDB" id="EMD-3461"/>
<dbReference type="EMDB" id="EMD-36839"/>
<dbReference type="EMDB" id="EMD-36945"/>
<dbReference type="EMDB" id="EMD-38660"/>
<dbReference type="EMDB" id="EMD-4140"/>
<dbReference type="EMDB" id="EMD-4427"/>
<dbReference type="EMDB" id="EMD-4474"/>
<dbReference type="EMDB" id="EMD-4793"/>
<dbReference type="EMDB" id="EMD-50259"/>
<dbReference type="EMDB" id="EMD-6695"/>
<dbReference type="SMR" id="P05759"/>
<dbReference type="BioGRID" id="31440">
    <property type="interactions" value="340"/>
</dbReference>
<dbReference type="ComplexPortal" id="CPX-1599">
    <property type="entry name" value="40S cytosolic small ribosomal subunit"/>
</dbReference>
<dbReference type="DIP" id="DIP-6389N"/>
<dbReference type="FunCoup" id="P05759">
    <property type="interactions" value="1461"/>
</dbReference>
<dbReference type="IntAct" id="P05759">
    <property type="interactions" value="23"/>
</dbReference>
<dbReference type="MINT" id="P05759"/>
<dbReference type="STRING" id="4932.YLR167W"/>
<dbReference type="iPTMnet" id="P05759"/>
<dbReference type="PaxDb" id="4932-YLR167W"/>
<dbReference type="PeptideAtlas" id="P05759"/>
<dbReference type="EnsemblFungi" id="YLR167W_mRNA">
    <property type="protein sequence ID" value="YLR167W"/>
    <property type="gene ID" value="YLR167W"/>
</dbReference>
<dbReference type="GeneID" id="850864"/>
<dbReference type="KEGG" id="sce:YLR167W"/>
<dbReference type="AGR" id="SGD:S000004157"/>
<dbReference type="SGD" id="S000004157">
    <property type="gene designation" value="RPS31"/>
</dbReference>
<dbReference type="VEuPathDB" id="FungiDB:YLR167W"/>
<dbReference type="eggNOG" id="KOG0004">
    <property type="taxonomic scope" value="Eukaryota"/>
</dbReference>
<dbReference type="GeneTree" id="ENSGT00940000157820"/>
<dbReference type="HOGENOM" id="CLU_010412_2_0_1"/>
<dbReference type="InParanoid" id="P05759"/>
<dbReference type="OMA" id="GVFMAFH"/>
<dbReference type="OrthoDB" id="428577at2759"/>
<dbReference type="BioCyc" id="YEAST:G3O-32297-MONOMER"/>
<dbReference type="Reactome" id="R-SCE-156827">
    <property type="pathway name" value="L13a-mediated translational silencing of Ceruloplasmin expression"/>
</dbReference>
<dbReference type="Reactome" id="R-SCE-1799339">
    <property type="pathway name" value="SRP-dependent cotranslational protein targeting to membrane"/>
</dbReference>
<dbReference type="Reactome" id="R-SCE-72649">
    <property type="pathway name" value="Translation initiation complex formation"/>
</dbReference>
<dbReference type="Reactome" id="R-SCE-72689">
    <property type="pathway name" value="Formation of a pool of free 40S subunits"/>
</dbReference>
<dbReference type="Reactome" id="R-SCE-72695">
    <property type="pathway name" value="Formation of the ternary complex, and subsequently, the 43S complex"/>
</dbReference>
<dbReference type="Reactome" id="R-SCE-72702">
    <property type="pathway name" value="Ribosomal scanning and start codon recognition"/>
</dbReference>
<dbReference type="Reactome" id="R-SCE-72706">
    <property type="pathway name" value="GTP hydrolysis and joining of the 60S ribosomal subunit"/>
</dbReference>
<dbReference type="Reactome" id="R-SCE-975956">
    <property type="pathway name" value="Nonsense Mediated Decay (NMD) independent of the Exon Junction Complex (EJC)"/>
</dbReference>
<dbReference type="Reactome" id="R-SCE-975957">
    <property type="pathway name" value="Nonsense Mediated Decay (NMD) enhanced by the Exon Junction Complex (EJC)"/>
</dbReference>
<dbReference type="BioGRID-ORCS" id="850864">
    <property type="hits" value="2 hits in 10 CRISPR screens"/>
</dbReference>
<dbReference type="PRO" id="PR:P05759"/>
<dbReference type="Proteomes" id="UP000002311">
    <property type="component" value="Chromosome XII"/>
</dbReference>
<dbReference type="RNAct" id="P05759">
    <property type="molecule type" value="protein"/>
</dbReference>
<dbReference type="GO" id="GO:0005737">
    <property type="term" value="C:cytoplasm"/>
    <property type="evidence" value="ECO:0000314"/>
    <property type="project" value="ComplexPortal"/>
</dbReference>
<dbReference type="GO" id="GO:0005829">
    <property type="term" value="C:cytosol"/>
    <property type="evidence" value="ECO:0000304"/>
    <property type="project" value="Reactome"/>
</dbReference>
<dbReference type="GO" id="GO:0022627">
    <property type="term" value="C:cytosolic small ribosomal subunit"/>
    <property type="evidence" value="ECO:0000314"/>
    <property type="project" value="SGD"/>
</dbReference>
<dbReference type="GO" id="GO:0005634">
    <property type="term" value="C:nucleus"/>
    <property type="evidence" value="ECO:0000318"/>
    <property type="project" value="GO_Central"/>
</dbReference>
<dbReference type="GO" id="GO:0031386">
    <property type="term" value="F:protein tag activity"/>
    <property type="evidence" value="ECO:0000315"/>
    <property type="project" value="SGD"/>
</dbReference>
<dbReference type="GO" id="GO:0003735">
    <property type="term" value="F:structural constituent of ribosome"/>
    <property type="evidence" value="ECO:0000305"/>
    <property type="project" value="SGD"/>
</dbReference>
<dbReference type="GO" id="GO:0031625">
    <property type="term" value="F:ubiquitin protein ligase binding"/>
    <property type="evidence" value="ECO:0000318"/>
    <property type="project" value="GO_Central"/>
</dbReference>
<dbReference type="GO" id="GO:0008270">
    <property type="term" value="F:zinc ion binding"/>
    <property type="evidence" value="ECO:0007669"/>
    <property type="project" value="UniProtKB-KW"/>
</dbReference>
<dbReference type="GO" id="GO:0002181">
    <property type="term" value="P:cytoplasmic translation"/>
    <property type="evidence" value="ECO:0000303"/>
    <property type="project" value="ComplexPortal"/>
</dbReference>
<dbReference type="GO" id="GO:1990145">
    <property type="term" value="P:maintenance of translational fidelity"/>
    <property type="evidence" value="ECO:0000315"/>
    <property type="project" value="SGD"/>
</dbReference>
<dbReference type="GO" id="GO:0002109">
    <property type="term" value="P:maturation of SSU-rRNA from tricistronic rRNA transcript (SSU-rRNA, LSU-rRNA,5S)"/>
    <property type="evidence" value="ECO:0000315"/>
    <property type="project" value="SGD"/>
</dbReference>
<dbReference type="GO" id="GO:0019941">
    <property type="term" value="P:modification-dependent protein catabolic process"/>
    <property type="evidence" value="ECO:0000318"/>
    <property type="project" value="GO_Central"/>
</dbReference>
<dbReference type="GO" id="GO:0016567">
    <property type="term" value="P:protein ubiquitination"/>
    <property type="evidence" value="ECO:0000318"/>
    <property type="project" value="GO_Central"/>
</dbReference>
<dbReference type="GO" id="GO:0000028">
    <property type="term" value="P:ribosomal small subunit assembly"/>
    <property type="evidence" value="ECO:0000315"/>
    <property type="project" value="SGD"/>
</dbReference>
<dbReference type="GO" id="GO:0042254">
    <property type="term" value="P:ribosome biogenesis"/>
    <property type="evidence" value="ECO:0000315"/>
    <property type="project" value="SGD"/>
</dbReference>
<dbReference type="CDD" id="cd01803">
    <property type="entry name" value="Ubl_ubiquitin"/>
    <property type="match status" value="1"/>
</dbReference>
<dbReference type="FunFam" id="3.10.20.90:FF:000008">
    <property type="entry name" value="Ubiquitin-40S ribosomal protein S27a"/>
    <property type="match status" value="1"/>
</dbReference>
<dbReference type="Gene3D" id="6.20.50.150">
    <property type="match status" value="1"/>
</dbReference>
<dbReference type="Gene3D" id="3.10.20.90">
    <property type="entry name" value="Phosphatidylinositol 3-kinase Catalytic Subunit, Chain A, domain 1"/>
    <property type="match status" value="1"/>
</dbReference>
<dbReference type="InterPro" id="IPR002906">
    <property type="entry name" value="Ribosomal_eS31"/>
</dbReference>
<dbReference type="InterPro" id="IPR038582">
    <property type="entry name" value="Ribosomal_eS31_euk-type_sf"/>
</dbReference>
<dbReference type="InterPro" id="IPR011332">
    <property type="entry name" value="Ribosomal_zn-bd"/>
</dbReference>
<dbReference type="InterPro" id="IPR000626">
    <property type="entry name" value="Ubiquitin-like_dom"/>
</dbReference>
<dbReference type="InterPro" id="IPR029071">
    <property type="entry name" value="Ubiquitin-like_domsf"/>
</dbReference>
<dbReference type="InterPro" id="IPR019954">
    <property type="entry name" value="Ubiquitin_CS"/>
</dbReference>
<dbReference type="InterPro" id="IPR019956">
    <property type="entry name" value="Ubiquitin_dom"/>
</dbReference>
<dbReference type="InterPro" id="IPR050158">
    <property type="entry name" value="Ubiquitin_ubiquitin-like"/>
</dbReference>
<dbReference type="PANTHER" id="PTHR10666">
    <property type="entry name" value="UBIQUITIN"/>
    <property type="match status" value="1"/>
</dbReference>
<dbReference type="Pfam" id="PF01599">
    <property type="entry name" value="Ribosomal_S27"/>
    <property type="match status" value="1"/>
</dbReference>
<dbReference type="Pfam" id="PF00240">
    <property type="entry name" value="ubiquitin"/>
    <property type="match status" value="1"/>
</dbReference>
<dbReference type="PRINTS" id="PR00348">
    <property type="entry name" value="UBIQUITIN"/>
</dbReference>
<dbReference type="SMART" id="SM01402">
    <property type="entry name" value="Ribosomal_S27"/>
    <property type="match status" value="1"/>
</dbReference>
<dbReference type="SMART" id="SM00213">
    <property type="entry name" value="UBQ"/>
    <property type="match status" value="1"/>
</dbReference>
<dbReference type="SUPFAM" id="SSF54236">
    <property type="entry name" value="Ubiquitin-like"/>
    <property type="match status" value="1"/>
</dbReference>
<dbReference type="SUPFAM" id="SSF57829">
    <property type="entry name" value="Zn-binding ribosomal proteins"/>
    <property type="match status" value="1"/>
</dbReference>
<dbReference type="PROSITE" id="PS00299">
    <property type="entry name" value="UBIQUITIN_1"/>
    <property type="match status" value="1"/>
</dbReference>
<dbReference type="PROSITE" id="PS50053">
    <property type="entry name" value="UBIQUITIN_2"/>
    <property type="match status" value="1"/>
</dbReference>
<comment type="function">
    <molecule>Ubiquitin</molecule>
    <text evidence="1">Exists either covalently attached to another protein, or free (unanchored). When covalently bound, it is conjugated to target proteins via an isopeptide bond either as a monomer (monoubiquitin), a polymer linked via different Lys residues of the ubiquitin (polyubiquitin chains) or a linear polymer linked via the initiator Met of the ubiquitin (linear polyubiquitin chains). Polyubiquitin chains, when attached to a target protein, have different functions depending on the Lys residue of the ubiquitin that is linked: Lys-6-linked may be involved in DNA repair; Lys-11-linked is involved in ERAD (endoplasmic reticulum-associated degradation) and in cell-cycle regulation; Lys-29-linked is involved in lysosomal degradation; Lys-33-linked is involved in kinase modification; Lys-48-linked is involved in protein degradation via the proteasome; Lys-63-linked is involved in endocytosis, and DNA-damage responses. Linear polymer chains formed via attachment by the initiator Met lead to cell signaling. Ubiquitin is usually conjugated to Lys residues of target proteins, however, in rare cases, conjugation to Cys or Ser residues has been observed. When polyubiquitin is free (unanchored-polyubiquitin), it also has distinct roles, such as in activation of protein kinases, and in signaling (By similarity).</text>
</comment>
<comment type="function">
    <molecule>Small ribosomal subunit protein eS31</molecule>
    <text evidence="9">Component of the ribosome, a large ribonucleoprotein complex responsible for the synthesis of proteins in the cell. The small ribosomal subunit (SSU) binds messenger RNAs (mRNAs) and translates the encoded message by selecting cognate aminoacyl-transfer RNA (tRNA) molecules. The large subunit (LSU) contains the ribosomal catalytic site termed the peptidyl transferase center (PTC), which catalyzes the formation of peptide bonds, thereby polymerizing the amino acids delivered by tRNAs into a polypeptide chain. The nascent polypeptides leave the ribosome through a tunnel in the LSU and interact with protein factors that function in enzymatic processing, targeting, and the membrane insertion of nascent chains at the exit of the ribosomal tunnel.</text>
</comment>
<comment type="subunit">
    <molecule>Small ribosomal subunit protein eS31</molecule>
    <text evidence="4 10">Component of the small ribosomal subunit (SSU). Mature yeast ribosomes consist of a small (40S) and a large (60S) subunit. The 40S small subunit contains 1 molecule of ribosomal RNA (18S rRNA) and 33 different proteins (encoded by 57 genes). The large 60S subunit contains 3 rRNA molecules (25S, 5.8S and 5S rRNA) and 46 different proteins (encoded by 81 genes) (PubMed:22096102, PubMed:9559554).</text>
</comment>
<comment type="subcellular location">
    <molecule>Ubiquitin</molecule>
    <subcellularLocation>
        <location evidence="1">Cytoplasm</location>
    </subcellularLocation>
    <subcellularLocation>
        <location evidence="1">Nucleus</location>
    </subcellularLocation>
</comment>
<comment type="subcellular location">
    <molecule>Small ribosomal subunit protein eS31</molecule>
    <subcellularLocation>
        <location evidence="4">Cytoplasm</location>
    </subcellularLocation>
</comment>
<comment type="miscellaneous">
    <text evidence="8">Ubiquitin is encoded by several different genes. UBI1 and UBI2 genes code for a single copy of ubiquitin fused to the ribosomal proteins eL40A and eL40B, respectively. UBI3 is a polyprotein with one copy of ubiquitin fused to ribosomal protein eS31. UBI4 is a polyprotein containing 5 exact head to tail repeats of ubiquitin.</text>
</comment>
<comment type="similarity">
    <text evidence="8">In the N-terminal section; belongs to the ubiquitin family.</text>
</comment>
<comment type="similarity">
    <text evidence="8">In the C-terminal section; belongs to the eukaryotic ribosomal protein eS31 family.</text>
</comment>
<reference key="1">
    <citation type="journal article" date="1987" name="EMBO J.">
        <title>The yeast ubiquitin genes: a family of natural gene fusions.</title>
        <authorList>
            <person name="Oezkaynak E."/>
            <person name="Finley D."/>
            <person name="Solomon M.J."/>
            <person name="Varshavsky A."/>
        </authorList>
    </citation>
    <scope>NUCLEOTIDE SEQUENCE [GENOMIC DNA]</scope>
</reference>
<reference key="2">
    <citation type="journal article" date="1997" name="Nature">
        <title>The nucleotide sequence of Saccharomyces cerevisiae chromosome XII.</title>
        <authorList>
            <person name="Johnston M."/>
            <person name="Hillier L.W."/>
            <person name="Riles L."/>
            <person name="Albermann K."/>
            <person name="Andre B."/>
            <person name="Ansorge W."/>
            <person name="Benes V."/>
            <person name="Brueckner M."/>
            <person name="Delius H."/>
            <person name="Dubois E."/>
            <person name="Duesterhoeft A."/>
            <person name="Entian K.-D."/>
            <person name="Floeth M."/>
            <person name="Goffeau A."/>
            <person name="Hebling U."/>
            <person name="Heumann K."/>
            <person name="Heuss-Neitzel D."/>
            <person name="Hilbert H."/>
            <person name="Hilger F."/>
            <person name="Kleine K."/>
            <person name="Koetter P."/>
            <person name="Louis E.J."/>
            <person name="Messenguy F."/>
            <person name="Mewes H.-W."/>
            <person name="Miosga T."/>
            <person name="Moestl D."/>
            <person name="Mueller-Auer S."/>
            <person name="Nentwich U."/>
            <person name="Obermaier B."/>
            <person name="Piravandi E."/>
            <person name="Pohl T.M."/>
            <person name="Portetelle D."/>
            <person name="Purnelle B."/>
            <person name="Rechmann S."/>
            <person name="Rieger M."/>
            <person name="Rinke M."/>
            <person name="Rose M."/>
            <person name="Scharfe M."/>
            <person name="Scherens B."/>
            <person name="Scholler P."/>
            <person name="Schwager C."/>
            <person name="Schwarz S."/>
            <person name="Underwood A.P."/>
            <person name="Urrestarazu L.A."/>
            <person name="Vandenbol M."/>
            <person name="Verhasselt P."/>
            <person name="Vierendeels F."/>
            <person name="Voet M."/>
            <person name="Volckaert G."/>
            <person name="Voss H."/>
            <person name="Wambutt R."/>
            <person name="Wedler E."/>
            <person name="Wedler H."/>
            <person name="Zimmermann F.K."/>
            <person name="Zollner A."/>
            <person name="Hani J."/>
            <person name="Hoheisel J.D."/>
        </authorList>
    </citation>
    <scope>NUCLEOTIDE SEQUENCE [LARGE SCALE GENOMIC DNA]</scope>
    <source>
        <strain>ATCC 204508 / S288c</strain>
    </source>
</reference>
<reference key="3">
    <citation type="journal article" date="2014" name="G3 (Bethesda)">
        <title>The reference genome sequence of Saccharomyces cerevisiae: Then and now.</title>
        <authorList>
            <person name="Engel S.R."/>
            <person name="Dietrich F.S."/>
            <person name="Fisk D.G."/>
            <person name="Binkley G."/>
            <person name="Balakrishnan R."/>
            <person name="Costanzo M.C."/>
            <person name="Dwight S.S."/>
            <person name="Hitz B.C."/>
            <person name="Karra K."/>
            <person name="Nash R.S."/>
            <person name="Weng S."/>
            <person name="Wong E.D."/>
            <person name="Lloyd P."/>
            <person name="Skrzypek M.S."/>
            <person name="Miyasato S.R."/>
            <person name="Simison M."/>
            <person name="Cherry J.M."/>
        </authorList>
    </citation>
    <scope>GENOME REANNOTATION</scope>
    <source>
        <strain>ATCC 204508 / S288c</strain>
    </source>
</reference>
<reference key="4">
    <citation type="journal article" date="1984" name="Mol. Gen. Genet.">
        <title>Yeast ribosomal proteins. VIII. Isolation of two proteins and sequence characterization of twenty-four proteins from cytoplasmic ribosomes.</title>
        <authorList>
            <person name="Otaka E."/>
            <person name="Higo K."/>
            <person name="Itoh T."/>
        </authorList>
    </citation>
    <scope>PARTIAL PROTEIN SEQUENCE OF 77-95</scope>
</reference>
<reference key="5">
    <citation type="journal article" date="1989" name="Nature">
        <title>The tails of ubiquitin precursors are ribosomal proteins whose fusion to ubiquitin facilitates ribosome biogenesis.</title>
        <authorList>
            <person name="Finley D."/>
            <person name="Bartel B."/>
            <person name="Varshavsky A."/>
        </authorList>
    </citation>
    <scope>IDENTIFICATION OF PROTEIN (S31)</scope>
</reference>
<reference key="6">
    <citation type="journal article" date="1995" name="J. Biol. Chem.">
        <title>A proteolytic pathway that recognizes ubiquitin as a degradation signal.</title>
        <authorList>
            <person name="Johnson E.S."/>
            <person name="Ma P.C.M."/>
            <person name="Ota I.M."/>
            <person name="Varshavsky A."/>
        </authorList>
    </citation>
    <scope>MUTAGENESIS OF LYS-29; LYS-48 AND LYS-63</scope>
</reference>
<reference key="7">
    <citation type="journal article" date="1995" name="Mol. Cell. Biol.">
        <title>A ubiquitin mutant with specific defects in DNA repair and multiubiquitination.</title>
        <authorList>
            <person name="Spence J."/>
            <person name="Sadis S."/>
            <person name="Haas A.L."/>
            <person name="Finley D."/>
        </authorList>
    </citation>
    <scope>MUTAGENESIS OF LYSINE RESIDUES IN UBIQUITIN</scope>
</reference>
<reference key="8">
    <citation type="journal article" date="1998" name="Yeast">
        <title>The list of cytoplasmic ribosomal proteins of Saccharomyces cerevisiae.</title>
        <authorList>
            <person name="Planta R.J."/>
            <person name="Mager W.H."/>
        </authorList>
    </citation>
    <scope>NOMENCLATURE</scope>
    <scope>SUBUNIT (S31)</scope>
</reference>
<reference key="9">
    <citation type="journal article" date="2007" name="Proc. Natl. Acad. Sci. U.S.A.">
        <title>Analysis of phosphorylation sites on proteins from Saccharomyces cerevisiae by electron transfer dissociation (ETD) mass spectrometry.</title>
        <authorList>
            <person name="Chi A."/>
            <person name="Huttenhower C."/>
            <person name="Geer L.Y."/>
            <person name="Coon J.J."/>
            <person name="Syka J.E.P."/>
            <person name="Bai D.L."/>
            <person name="Shabanowitz J."/>
            <person name="Burke D.J."/>
            <person name="Troyanskaya O.G."/>
            <person name="Hunt D.F."/>
        </authorList>
    </citation>
    <scope>PHOSPHORYLATION [LARGE SCALE ANALYSIS] AT SER-122</scope>
    <scope>IDENTIFICATION BY MASS SPECTROMETRY [LARGE SCALE ANALYSIS]</scope>
</reference>
<reference key="10">
    <citation type="journal article" date="2008" name="Mol. Cell. Proteomics">
        <title>A multidimensional chromatography technology for in-depth phosphoproteome analysis.</title>
        <authorList>
            <person name="Albuquerque C.P."/>
            <person name="Smolka M.B."/>
            <person name="Payne S.H."/>
            <person name="Bafna V."/>
            <person name="Eng J."/>
            <person name="Zhou H."/>
        </authorList>
    </citation>
    <scope>IDENTIFICATION BY MASS SPECTROMETRY [LARGE SCALE ANALYSIS]</scope>
</reference>
<reference key="11">
    <citation type="journal article" date="2009" name="Science">
        <title>Global analysis of Cdk1 substrate phosphorylation sites provides insights into evolution.</title>
        <authorList>
            <person name="Holt L.J."/>
            <person name="Tuch B.B."/>
            <person name="Villen J."/>
            <person name="Johnson A.D."/>
            <person name="Gygi S.P."/>
            <person name="Morgan D.O."/>
        </authorList>
    </citation>
    <scope>PHOSPHORYLATION [LARGE SCALE ANALYSIS] AT SER-122</scope>
    <scope>IDENTIFICATION BY MASS SPECTROMETRY [LARGE SCALE ANALYSIS]</scope>
</reference>
<reference key="12">
    <citation type="journal article" date="2014" name="Curr. Opin. Struct. Biol.">
        <title>A new system for naming ribosomal proteins.</title>
        <authorList>
            <person name="Ban N."/>
            <person name="Beckmann R."/>
            <person name="Cate J.H.D."/>
            <person name="Dinman J.D."/>
            <person name="Dragon F."/>
            <person name="Ellis S.R."/>
            <person name="Lafontaine D.L.J."/>
            <person name="Lindahl L."/>
            <person name="Liljas A."/>
            <person name="Lipton J.M."/>
            <person name="McAlear M.A."/>
            <person name="Moore P.B."/>
            <person name="Noller H.F."/>
            <person name="Ortega J."/>
            <person name="Panse V.G."/>
            <person name="Ramakrishnan V."/>
            <person name="Spahn C.M.T."/>
            <person name="Steitz T.A."/>
            <person name="Tchorzewski M."/>
            <person name="Tollervey D."/>
            <person name="Warren A.J."/>
            <person name="Williamson J.R."/>
            <person name="Wilson D."/>
            <person name="Yonath A."/>
            <person name="Yusupov M."/>
        </authorList>
    </citation>
    <scope>NOMENCLATURE</scope>
</reference>
<reference key="13">
    <citation type="journal article" date="2011" name="Science">
        <title>The structure of the eukaryotic ribosome at 3.0 A resolution.</title>
        <authorList>
            <person name="Ben-Shem A."/>
            <person name="Garreau de Loubresse N."/>
            <person name="Melnikov S."/>
            <person name="Jenner L."/>
            <person name="Yusupova G."/>
            <person name="Yusupov M."/>
        </authorList>
    </citation>
    <scope>X-RAY CRYSTALLOGRAPHY (3.00 ANGSTROMS) OF 80S RIBOSOME</scope>
    <scope>SUBUNIT</scope>
    <scope>SUBCELLULAR LOCATION</scope>
</reference>
<protein>
    <recommendedName>
        <fullName evidence="8">Ubiquitin-ribosomal protein eS31 fusion protein</fullName>
    </recommendedName>
    <component>
        <recommendedName>
            <fullName>Ubiquitin</fullName>
        </recommendedName>
    </component>
    <component>
        <recommendedName>
            <fullName evidence="6">Small ribosomal subunit protein eS31</fullName>
        </recommendedName>
        <alternativeName>
            <fullName evidence="7">40S ribosomal protein S31</fullName>
        </alternativeName>
        <alternativeName>
            <fullName>CEP76</fullName>
        </alternativeName>
        <alternativeName>
            <fullName>S37</fullName>
        </alternativeName>
        <alternativeName>
            <fullName>YS24</fullName>
        </alternativeName>
    </component>
</protein>
<feature type="chain" id="PRO_0000396487" description="Ubiquitin">
    <location>
        <begin position="1"/>
        <end position="76"/>
    </location>
</feature>
<feature type="chain" id="PRO_0000137688" description="Small ribosomal subunit protein eS31">
    <location>
        <begin position="77"/>
        <end position="152"/>
    </location>
</feature>
<feature type="domain" description="Ubiquitin-like" evidence="3">
    <location>
        <begin position="1"/>
        <end position="76"/>
    </location>
</feature>
<feature type="zinc finger region" description="C4-type">
    <location>
        <begin position="121"/>
        <end position="144"/>
    </location>
</feature>
<feature type="modified residue" description="Phosphoserine" evidence="11 12">
    <location>
        <position position="122"/>
    </location>
</feature>
<feature type="cross-link" description="Glycyl lysine isopeptide (Lys-Gly) (interchain with G-Cter in ubiquitin)" evidence="2">
    <location>
        <position position="6"/>
    </location>
</feature>
<feature type="cross-link" description="Glycyl lysine isopeptide (Lys-Gly) (interchain with G-Cter in ubiquitin)" evidence="2">
    <location>
        <position position="11"/>
    </location>
</feature>
<feature type="cross-link" description="Glycyl lysine isopeptide (Lys-Gly) (interchain with G-Cter in ubiquitin)" evidence="2">
    <location>
        <position position="27"/>
    </location>
</feature>
<feature type="cross-link" description="Glycyl lysine isopeptide (Lys-Gly) (interchain with G-Cter in ubiquitin)" evidence="2">
    <location>
        <position position="29"/>
    </location>
</feature>
<feature type="cross-link" description="Glycyl lysine isopeptide (Lys-Gly) (interchain with G-Cter in ubiquitin)" evidence="2">
    <location>
        <position position="33"/>
    </location>
</feature>
<feature type="cross-link" description="Glycyl lysine isopeptide (Lys-Gly) (interchain with G-Cter in ubiquitin)" evidence="2">
    <location>
        <position position="48"/>
    </location>
</feature>
<feature type="cross-link" description="Glycyl lysine isopeptide (Lys-Gly) (interchain with G-Cter in ubiquitin)" evidence="2">
    <location>
        <position position="63"/>
    </location>
</feature>
<feature type="cross-link" description="Glycyl lysine isopeptide (Gly-Lys) (interchain with K-? in acceptor proteins)" evidence="3">
    <location>
        <position position="76"/>
    </location>
</feature>
<feature type="cross-link" description="Glycyl lysine isopeptide (Lys-Gly) (interchain with G-Cter in ubiquitin)" evidence="2">
    <location>
        <position position="107"/>
    </location>
</feature>
<feature type="cross-link" description="Glycyl lysine isopeptide (Lys-Gly) (interchain with G-Cter in ubiquitin)" evidence="2">
    <location>
        <position position="113"/>
    </location>
</feature>
<feature type="mutagenesis site" description="Deficiency in ubiquitin-protein conjugate formation." evidence="5">
    <original>K</original>
    <variation>R</variation>
    <location>
        <position position="29"/>
    </location>
</feature>
<feature type="mutagenesis site" description="Deficiency in ubiquitin-protein conjugate formation." evidence="5">
    <original>K</original>
    <variation>R</variation>
    <location>
        <position position="48"/>
    </location>
</feature>
<feature type="mutagenesis site" description="Deficiency in ubiquitin-protein conjugate formation. Loss of DNA repair function." evidence="5">
    <original>K</original>
    <variation>R</variation>
    <location>
        <position position="63"/>
    </location>
</feature>
<feature type="strand" evidence="14">
    <location>
        <begin position="2"/>
        <end position="7"/>
    </location>
</feature>
<feature type="strand" evidence="16">
    <location>
        <begin position="8"/>
        <end position="10"/>
    </location>
</feature>
<feature type="strand" evidence="14">
    <location>
        <begin position="12"/>
        <end position="16"/>
    </location>
</feature>
<feature type="helix" evidence="14">
    <location>
        <begin position="23"/>
        <end position="34"/>
    </location>
</feature>
<feature type="helix" evidence="14">
    <location>
        <begin position="38"/>
        <end position="40"/>
    </location>
</feature>
<feature type="strand" evidence="14">
    <location>
        <begin position="42"/>
        <end position="45"/>
    </location>
</feature>
<feature type="strand" evidence="13">
    <location>
        <begin position="47"/>
        <end position="49"/>
    </location>
</feature>
<feature type="helix" evidence="14">
    <location>
        <begin position="57"/>
        <end position="59"/>
    </location>
</feature>
<feature type="strand" evidence="14">
    <location>
        <begin position="66"/>
        <end position="70"/>
    </location>
</feature>
<feature type="strand" evidence="15">
    <location>
        <begin position="110"/>
        <end position="112"/>
    </location>
</feature>
<feature type="strand" evidence="15">
    <location>
        <begin position="135"/>
        <end position="137"/>
    </location>
</feature>
<feature type="strand" evidence="15">
    <location>
        <begin position="142"/>
        <end position="146"/>
    </location>
</feature>
<name>RS31_YEAST</name>
<organism>
    <name type="scientific">Saccharomyces cerevisiae (strain ATCC 204508 / S288c)</name>
    <name type="common">Baker's yeast</name>
    <dbReference type="NCBI Taxonomy" id="559292"/>
    <lineage>
        <taxon>Eukaryota</taxon>
        <taxon>Fungi</taxon>
        <taxon>Dikarya</taxon>
        <taxon>Ascomycota</taxon>
        <taxon>Saccharomycotina</taxon>
        <taxon>Saccharomycetes</taxon>
        <taxon>Saccharomycetales</taxon>
        <taxon>Saccharomycetaceae</taxon>
        <taxon>Saccharomyces</taxon>
    </lineage>
</organism>
<keyword id="KW-0002">3D-structure</keyword>
<keyword id="KW-0963">Cytoplasm</keyword>
<keyword id="KW-0903">Direct protein sequencing</keyword>
<keyword id="KW-1017">Isopeptide bond</keyword>
<keyword id="KW-0479">Metal-binding</keyword>
<keyword id="KW-0539">Nucleus</keyword>
<keyword id="KW-0597">Phosphoprotein</keyword>
<keyword id="KW-1185">Reference proteome</keyword>
<keyword id="KW-0687">Ribonucleoprotein</keyword>
<keyword id="KW-0689">Ribosomal protein</keyword>
<keyword id="KW-0832">Ubl conjugation</keyword>
<keyword id="KW-0862">Zinc</keyword>
<keyword id="KW-0863">Zinc-finger</keyword>